<name>DISA_COREF</name>
<protein>
    <recommendedName>
        <fullName evidence="1">DNA integrity scanning protein DisA</fullName>
    </recommendedName>
    <alternativeName>
        <fullName evidence="1">Cyclic di-AMP synthase</fullName>
        <shortName evidence="1">c-di-AMP synthase</shortName>
    </alternativeName>
    <alternativeName>
        <fullName evidence="1">Diadenylate cyclase</fullName>
        <ecNumber evidence="1">2.7.7.85</ecNumber>
    </alternativeName>
</protein>
<reference key="1">
    <citation type="journal article" date="2003" name="Genome Res.">
        <title>Comparative complete genome sequence analysis of the amino acid replacements responsible for the thermostability of Corynebacterium efficiens.</title>
        <authorList>
            <person name="Nishio Y."/>
            <person name="Nakamura Y."/>
            <person name="Kawarabayasi Y."/>
            <person name="Usuda Y."/>
            <person name="Kimura E."/>
            <person name="Sugimoto S."/>
            <person name="Matsui K."/>
            <person name="Yamagishi A."/>
            <person name="Kikuchi H."/>
            <person name="Ikeo K."/>
            <person name="Gojobori T."/>
        </authorList>
    </citation>
    <scope>NUCLEOTIDE SEQUENCE [LARGE SCALE GENOMIC DNA]</scope>
    <source>
        <strain>DSM 44549 / YS-314 / AJ 12310 / JCM 11189 / NBRC 100395</strain>
    </source>
</reference>
<evidence type="ECO:0000255" key="1">
    <source>
        <dbReference type="HAMAP-Rule" id="MF_01438"/>
    </source>
</evidence>
<evidence type="ECO:0000255" key="2">
    <source>
        <dbReference type="PROSITE-ProRule" id="PRU01130"/>
    </source>
</evidence>
<keyword id="KW-0067">ATP-binding</keyword>
<keyword id="KW-0227">DNA damage</keyword>
<keyword id="KW-0234">DNA repair</keyword>
<keyword id="KW-0238">DNA-binding</keyword>
<keyword id="KW-0460">Magnesium</keyword>
<keyword id="KW-0547">Nucleotide-binding</keyword>
<keyword id="KW-0548">Nucleotidyltransferase</keyword>
<keyword id="KW-1185">Reference proteome</keyword>
<keyword id="KW-0808">Transferase</keyword>
<accession>Q8FMH9</accession>
<gene>
    <name evidence="1" type="primary">disA</name>
    <name type="ordered locus">CE2525</name>
</gene>
<comment type="function">
    <text evidence="1">Participates in a DNA-damage check-point. DisA forms globular foci that rapidly scan along the chromosomes searching for lesions.</text>
</comment>
<comment type="function">
    <text evidence="1">Also has diadenylate cyclase activity, catalyzing the condensation of 2 ATP molecules into cyclic di-AMP (c-di-AMP). c-di-AMP likely acts as a signaling molecule that may couple DNA integrity with a cellular process.</text>
</comment>
<comment type="catalytic activity">
    <reaction evidence="1">
        <text>2 ATP = 3',3'-c-di-AMP + 2 diphosphate</text>
        <dbReference type="Rhea" id="RHEA:35655"/>
        <dbReference type="ChEBI" id="CHEBI:30616"/>
        <dbReference type="ChEBI" id="CHEBI:33019"/>
        <dbReference type="ChEBI" id="CHEBI:71500"/>
        <dbReference type="EC" id="2.7.7.85"/>
    </reaction>
</comment>
<comment type="cofactor">
    <cofactor evidence="1">
        <name>Mg(2+)</name>
        <dbReference type="ChEBI" id="CHEBI:18420"/>
    </cofactor>
</comment>
<comment type="subunit">
    <text evidence="1">Homooctamer.</text>
</comment>
<comment type="similarity">
    <text evidence="1">Belongs to the DisA family.</text>
</comment>
<sequence length="356" mass="39368">MSTTTDILPDVHTMRDTLQRLAPGTPLRDGLDRIVRGHTGALIVLGDEENVTSICDGGFEFDVTFAATRLRELCKMDGAVVLSSDGERIKRANVQLIPSPSWPTQESGTRHRSAERTALQTGVPVIAVSESQNTITLYVEGKSHILEEPSTLLNRANQALGTMERYRDRLDQVNTRLHMAELHNYATVIDVVSVIQREEMLRRVGETIDTNVLELGREAKQIQIQLTELRGDNDRERGYIIADYLVTDGIPTDETITEALEAVSGLDDKSLMKPSNIARILGLPPTEEALDEPVVPRGYRTLNRVPRVQKFLMDKLVGEFGNLHALTSASVEEISAVDGVGSLWARHITDGLARLT</sequence>
<feature type="chain" id="PRO_0000255643" description="DNA integrity scanning protein DisA">
    <location>
        <begin position="1"/>
        <end position="356"/>
    </location>
</feature>
<feature type="domain" description="DAC" evidence="2">
    <location>
        <begin position="11"/>
        <end position="149"/>
    </location>
</feature>
<feature type="binding site" evidence="1">
    <location>
        <position position="78"/>
    </location>
    <ligand>
        <name>ATP</name>
        <dbReference type="ChEBI" id="CHEBI:30616"/>
    </ligand>
</feature>
<feature type="binding site" evidence="1">
    <location>
        <position position="96"/>
    </location>
    <ligand>
        <name>ATP</name>
        <dbReference type="ChEBI" id="CHEBI:30616"/>
    </ligand>
</feature>
<feature type="binding site" evidence="1">
    <location>
        <begin position="109"/>
        <end position="113"/>
    </location>
    <ligand>
        <name>ATP</name>
        <dbReference type="ChEBI" id="CHEBI:30616"/>
    </ligand>
</feature>
<proteinExistence type="inferred from homology"/>
<dbReference type="EC" id="2.7.7.85" evidence="1"/>
<dbReference type="EMBL" id="BA000035">
    <property type="protein sequence ID" value="BAC19335.1"/>
    <property type="molecule type" value="Genomic_DNA"/>
</dbReference>
<dbReference type="RefSeq" id="WP_006769113.1">
    <property type="nucleotide sequence ID" value="NC_004369.1"/>
</dbReference>
<dbReference type="SMR" id="Q8FMH9"/>
<dbReference type="STRING" id="196164.gene:10742972"/>
<dbReference type="KEGG" id="cef:CE2525"/>
<dbReference type="eggNOG" id="COG1623">
    <property type="taxonomic scope" value="Bacteria"/>
</dbReference>
<dbReference type="HOGENOM" id="CLU_787128_0_0_11"/>
<dbReference type="OrthoDB" id="41841at2"/>
<dbReference type="Proteomes" id="UP000001409">
    <property type="component" value="Chromosome"/>
</dbReference>
<dbReference type="GO" id="GO:0004016">
    <property type="term" value="F:adenylate cyclase activity"/>
    <property type="evidence" value="ECO:0007669"/>
    <property type="project" value="TreeGrafter"/>
</dbReference>
<dbReference type="GO" id="GO:0005524">
    <property type="term" value="F:ATP binding"/>
    <property type="evidence" value="ECO:0007669"/>
    <property type="project" value="UniProtKB-UniRule"/>
</dbReference>
<dbReference type="GO" id="GO:0106408">
    <property type="term" value="F:diadenylate cyclase activity"/>
    <property type="evidence" value="ECO:0007669"/>
    <property type="project" value="UniProtKB-EC"/>
</dbReference>
<dbReference type="GO" id="GO:0003677">
    <property type="term" value="F:DNA binding"/>
    <property type="evidence" value="ECO:0007669"/>
    <property type="project" value="UniProtKB-UniRule"/>
</dbReference>
<dbReference type="GO" id="GO:0006281">
    <property type="term" value="P:DNA repair"/>
    <property type="evidence" value="ECO:0007669"/>
    <property type="project" value="UniProtKB-UniRule"/>
</dbReference>
<dbReference type="FunFam" id="3.40.1700.10:FF:000001">
    <property type="entry name" value="DNA integrity scanning protein DisA"/>
    <property type="match status" value="1"/>
</dbReference>
<dbReference type="Gene3D" id="1.10.150.20">
    <property type="entry name" value="5' to 3' exonuclease, C-terminal subdomain"/>
    <property type="match status" value="1"/>
</dbReference>
<dbReference type="Gene3D" id="1.20.1260.110">
    <property type="entry name" value="DNA integrity scanning linker region"/>
    <property type="match status" value="1"/>
</dbReference>
<dbReference type="Gene3D" id="3.40.1700.10">
    <property type="entry name" value="DNA integrity scanning protein, DisA, N-terminal domain"/>
    <property type="match status" value="1"/>
</dbReference>
<dbReference type="HAMAP" id="MF_01438">
    <property type="entry name" value="DisA"/>
    <property type="match status" value="1"/>
</dbReference>
<dbReference type="InterPro" id="IPR050338">
    <property type="entry name" value="DisA"/>
</dbReference>
<dbReference type="InterPro" id="IPR038331">
    <property type="entry name" value="DisA_sf"/>
</dbReference>
<dbReference type="InterPro" id="IPR036888">
    <property type="entry name" value="DNA_integrity_DisA_N_sf"/>
</dbReference>
<dbReference type="InterPro" id="IPR018906">
    <property type="entry name" value="DNA_integrity_scan_DisA_link"/>
</dbReference>
<dbReference type="InterPro" id="IPR003390">
    <property type="entry name" value="DNA_integrity_scan_DisA_N"/>
</dbReference>
<dbReference type="InterPro" id="IPR023763">
    <property type="entry name" value="DNA_integrity_scanning_protein"/>
</dbReference>
<dbReference type="InterPro" id="IPR010994">
    <property type="entry name" value="RuvA_2-like"/>
</dbReference>
<dbReference type="NCBIfam" id="NF010009">
    <property type="entry name" value="PRK13482.1"/>
    <property type="match status" value="1"/>
</dbReference>
<dbReference type="PANTHER" id="PTHR34185">
    <property type="entry name" value="DIADENYLATE CYCLASE"/>
    <property type="match status" value="1"/>
</dbReference>
<dbReference type="PANTHER" id="PTHR34185:SF3">
    <property type="entry name" value="DNA INTEGRITY SCANNING PROTEIN DISA"/>
    <property type="match status" value="1"/>
</dbReference>
<dbReference type="Pfam" id="PF02457">
    <property type="entry name" value="DAC"/>
    <property type="match status" value="1"/>
</dbReference>
<dbReference type="Pfam" id="PF10635">
    <property type="entry name" value="DisA-linker"/>
    <property type="match status" value="1"/>
</dbReference>
<dbReference type="SUPFAM" id="SSF47781">
    <property type="entry name" value="RuvA domain 2-like"/>
    <property type="match status" value="1"/>
</dbReference>
<dbReference type="SUPFAM" id="SSF143597">
    <property type="entry name" value="YojJ-like"/>
    <property type="match status" value="1"/>
</dbReference>
<dbReference type="PROSITE" id="PS51794">
    <property type="entry name" value="DAC"/>
    <property type="match status" value="1"/>
</dbReference>
<organism>
    <name type="scientific">Corynebacterium efficiens (strain DSM 44549 / YS-314 / AJ 12310 / JCM 11189 / NBRC 100395)</name>
    <dbReference type="NCBI Taxonomy" id="196164"/>
    <lineage>
        <taxon>Bacteria</taxon>
        <taxon>Bacillati</taxon>
        <taxon>Actinomycetota</taxon>
        <taxon>Actinomycetes</taxon>
        <taxon>Mycobacteriales</taxon>
        <taxon>Corynebacteriaceae</taxon>
        <taxon>Corynebacterium</taxon>
    </lineage>
</organism>